<dbReference type="EC" id="3.1.-.-"/>
<dbReference type="EMBL" id="AAEY01000030">
    <property type="protein sequence ID" value="EAL20361.1"/>
    <property type="molecule type" value="Genomic_DNA"/>
</dbReference>
<dbReference type="RefSeq" id="XP_775008.1">
    <property type="nucleotide sequence ID" value="XM_769915.1"/>
</dbReference>
<dbReference type="SMR" id="P0CM51"/>
<dbReference type="ESTHER" id="cryne-q5kf48">
    <property type="family name" value="PGAP1"/>
</dbReference>
<dbReference type="GlyCosmos" id="P0CM51">
    <property type="glycosylation" value="4 sites, No reported glycans"/>
</dbReference>
<dbReference type="GeneID" id="4936723"/>
<dbReference type="KEGG" id="cnb:CNBF1710"/>
<dbReference type="VEuPathDB" id="FungiDB:CNBF1710"/>
<dbReference type="HOGENOM" id="CLU_020685_0_0_1"/>
<dbReference type="OrthoDB" id="1327at5206"/>
<dbReference type="GO" id="GO:0005789">
    <property type="term" value="C:endoplasmic reticulum membrane"/>
    <property type="evidence" value="ECO:0007669"/>
    <property type="project" value="UniProtKB-SubCell"/>
</dbReference>
<dbReference type="GO" id="GO:0050185">
    <property type="term" value="F:phosphatidylinositol deacylase activity"/>
    <property type="evidence" value="ECO:0007669"/>
    <property type="project" value="TreeGrafter"/>
</dbReference>
<dbReference type="GO" id="GO:0006888">
    <property type="term" value="P:endoplasmic reticulum to Golgi vesicle-mediated transport"/>
    <property type="evidence" value="ECO:0007669"/>
    <property type="project" value="TreeGrafter"/>
</dbReference>
<dbReference type="GO" id="GO:0006505">
    <property type="term" value="P:GPI anchor metabolic process"/>
    <property type="evidence" value="ECO:0007669"/>
    <property type="project" value="TreeGrafter"/>
</dbReference>
<dbReference type="GO" id="GO:0015031">
    <property type="term" value="P:protein transport"/>
    <property type="evidence" value="ECO:0007669"/>
    <property type="project" value="UniProtKB-KW"/>
</dbReference>
<dbReference type="FunFam" id="3.40.50.1820:FF:000789">
    <property type="entry name" value="GPI inositol-deacylase"/>
    <property type="match status" value="1"/>
</dbReference>
<dbReference type="Gene3D" id="3.40.50.1820">
    <property type="entry name" value="alpha/beta hydrolase"/>
    <property type="match status" value="1"/>
</dbReference>
<dbReference type="InterPro" id="IPR029058">
    <property type="entry name" value="AB_hydrolase_fold"/>
</dbReference>
<dbReference type="InterPro" id="IPR012908">
    <property type="entry name" value="PGAP1-ab_dom-like"/>
</dbReference>
<dbReference type="InterPro" id="IPR039529">
    <property type="entry name" value="PGAP1/BST1"/>
</dbReference>
<dbReference type="PANTHER" id="PTHR15495:SF7">
    <property type="entry name" value="GPI INOSITOL-DEACYLASE"/>
    <property type="match status" value="1"/>
</dbReference>
<dbReference type="PANTHER" id="PTHR15495">
    <property type="entry name" value="NEGATIVE REGULATOR OF VESICLE FORMATION-RELATED"/>
    <property type="match status" value="1"/>
</dbReference>
<dbReference type="Pfam" id="PF07819">
    <property type="entry name" value="PGAP1"/>
    <property type="match status" value="1"/>
</dbReference>
<dbReference type="SUPFAM" id="SSF53474">
    <property type="entry name" value="alpha/beta-Hydrolases"/>
    <property type="match status" value="1"/>
</dbReference>
<organism>
    <name type="scientific">Cryptococcus neoformans var. neoformans serotype D (strain B-3501A)</name>
    <name type="common">Filobasidiella neoformans</name>
    <dbReference type="NCBI Taxonomy" id="283643"/>
    <lineage>
        <taxon>Eukaryota</taxon>
        <taxon>Fungi</taxon>
        <taxon>Dikarya</taxon>
        <taxon>Basidiomycota</taxon>
        <taxon>Agaricomycotina</taxon>
        <taxon>Tremellomycetes</taxon>
        <taxon>Tremellales</taxon>
        <taxon>Cryptococcaceae</taxon>
        <taxon>Cryptococcus</taxon>
        <taxon>Cryptococcus neoformans species complex</taxon>
    </lineage>
</organism>
<feature type="chain" id="PRO_0000410027" description="GPI inositol-deacylase">
    <location>
        <begin position="1"/>
        <end position="768"/>
    </location>
</feature>
<feature type="transmembrane region" description="Helical" evidence="2">
    <location>
        <begin position="35"/>
        <end position="55"/>
    </location>
</feature>
<feature type="transmembrane region" description="Helical" evidence="2">
    <location>
        <begin position="604"/>
        <end position="624"/>
    </location>
</feature>
<feature type="transmembrane region" description="Helical" evidence="2">
    <location>
        <begin position="642"/>
        <end position="662"/>
    </location>
</feature>
<feature type="transmembrane region" description="Helical" evidence="2">
    <location>
        <begin position="663"/>
        <end position="683"/>
    </location>
</feature>
<feature type="transmembrane region" description="Helical" evidence="2">
    <location>
        <begin position="700"/>
        <end position="720"/>
    </location>
</feature>
<feature type="transmembrane region" description="Helical" evidence="2">
    <location>
        <begin position="725"/>
        <end position="745"/>
    </location>
</feature>
<feature type="transmembrane region" description="Helical" evidence="2">
    <location>
        <begin position="748"/>
        <end position="768"/>
    </location>
</feature>
<feature type="active site" evidence="1">
    <location>
        <position position="206"/>
    </location>
</feature>
<feature type="glycosylation site" description="N-linked (GlcNAc...) asparagine" evidence="2">
    <location>
        <position position="291"/>
    </location>
</feature>
<feature type="glycosylation site" description="N-linked (GlcNAc...) asparagine" evidence="2">
    <location>
        <position position="336"/>
    </location>
</feature>
<feature type="glycosylation site" description="N-linked (GlcNAc...) asparagine" evidence="2">
    <location>
        <position position="374"/>
    </location>
</feature>
<feature type="glycosylation site" description="N-linked (GlcNAc...) asparagine" evidence="2">
    <location>
        <position position="448"/>
    </location>
</feature>
<reference key="1">
    <citation type="journal article" date="2005" name="Science">
        <title>The genome of the basidiomycetous yeast and human pathogen Cryptococcus neoformans.</title>
        <authorList>
            <person name="Loftus B.J."/>
            <person name="Fung E."/>
            <person name="Roncaglia P."/>
            <person name="Rowley D."/>
            <person name="Amedeo P."/>
            <person name="Bruno D."/>
            <person name="Vamathevan J."/>
            <person name="Miranda M."/>
            <person name="Anderson I.J."/>
            <person name="Fraser J.A."/>
            <person name="Allen J.E."/>
            <person name="Bosdet I.E."/>
            <person name="Brent M.R."/>
            <person name="Chiu R."/>
            <person name="Doering T.L."/>
            <person name="Donlin M.J."/>
            <person name="D'Souza C.A."/>
            <person name="Fox D.S."/>
            <person name="Grinberg V."/>
            <person name="Fu J."/>
            <person name="Fukushima M."/>
            <person name="Haas B.J."/>
            <person name="Huang J.C."/>
            <person name="Janbon G."/>
            <person name="Jones S.J.M."/>
            <person name="Koo H.L."/>
            <person name="Krzywinski M.I."/>
            <person name="Kwon-Chung K.J."/>
            <person name="Lengeler K.B."/>
            <person name="Maiti R."/>
            <person name="Marra M.A."/>
            <person name="Marra R.E."/>
            <person name="Mathewson C.A."/>
            <person name="Mitchell T.G."/>
            <person name="Pertea M."/>
            <person name="Riggs F.R."/>
            <person name="Salzberg S.L."/>
            <person name="Schein J.E."/>
            <person name="Shvartsbeyn A."/>
            <person name="Shin H."/>
            <person name="Shumway M."/>
            <person name="Specht C.A."/>
            <person name="Suh B.B."/>
            <person name="Tenney A."/>
            <person name="Utterback T.R."/>
            <person name="Wickes B.L."/>
            <person name="Wortman J.R."/>
            <person name="Wye N.H."/>
            <person name="Kronstad J.W."/>
            <person name="Lodge J.K."/>
            <person name="Heitman J."/>
            <person name="Davis R.W."/>
            <person name="Fraser C.M."/>
            <person name="Hyman R.W."/>
        </authorList>
    </citation>
    <scope>NUCLEOTIDE SEQUENCE [LARGE SCALE GENOMIC DNA]</scope>
    <source>
        <strain>B-3501A</strain>
    </source>
</reference>
<name>BST1_CRYNB</name>
<comment type="function">
    <text evidence="1">Involved in inositol deacylation of GPI-anchored proteins which plays important roles in the quality control and ER-associated degradation of GPI-anchored proteins.</text>
</comment>
<comment type="subcellular location">
    <subcellularLocation>
        <location evidence="1">Endoplasmic reticulum membrane</location>
        <topology evidence="1">Multi-pass membrane protein</topology>
    </subcellularLocation>
</comment>
<comment type="similarity">
    <text evidence="3">Belongs to the GPI inositol-deacylase family.</text>
</comment>
<keyword id="KW-0256">Endoplasmic reticulum</keyword>
<keyword id="KW-0325">Glycoprotein</keyword>
<keyword id="KW-0378">Hydrolase</keyword>
<keyword id="KW-0472">Membrane</keyword>
<keyword id="KW-0653">Protein transport</keyword>
<keyword id="KW-0812">Transmembrane</keyword>
<keyword id="KW-1133">Transmembrane helix</keyword>
<keyword id="KW-0813">Transport</keyword>
<sequence length="768" mass="86618">MPAWPRFMSLRRQYLYKALDKNHQKHPIKHPHTRFLSRLFCALAVLFSYSIYQSFRTDLKQSGSWGCEMSWMSPSYRRLEWTEFISTRYALYLYREQGLDSEDTLSGHPVLFVPGNAGSYQQVRSIASSASKQYYEQVKARERNVVTGKKIDFFTADLKEEFSAFHARTVREQAVFIQHCIKGILQEYTHLPQEKRPTQVTLLAHSMGGVVARLAMDPITSISVDIIVTLSTPHILPPLALERDMDSIYSLIRWRRQHISTHPPLISICGGISDTQIVSDSCALPFFQAGNNSDIAVFTTGIPGVWTAVEHQAIIWCHQIRWRIARMLLDMSSRANTTAKLVTAKEWLLDYQEDETLKEPRSERQHDYSVSSRNMTFIGLHQPSKAFVAQQCNGLERCRTVPSVMSLLPFPNNPSDPFPLPGEGIKPSEVMLVAEISLSSTNTVVKINASQYGQTIAGSREHHLVKGNSWSEFTITMRYRYIRIQLLFCIRPTHTSTFSFYCGTLLTLPRQSWHLSGDISIALMSCTTGVAQKKLLQRTGQICDSVPYGRSCMASRVGCCGSSVSIIRFYQHRSVRTCKGFKLILVGEILSWNSALERIARRRMPICIVLLLLGATIQSQLPDFPMLHTFFLGVNQLEMVPLVGILGVWTFGLLCVVSFHLISTCAIFTTLLIPFKILHVAIWSRNIWTGSAALVSTDNNFYYAIPPALLVKCASCGGTIQKRHVCLKACRIALIILIMSSFSVGARWTWILSPIANAVLILFVASII</sequence>
<proteinExistence type="inferred from homology"/>
<gene>
    <name type="primary">BST1</name>
    <name type="ordered locus">CNBF1710</name>
</gene>
<protein>
    <recommendedName>
        <fullName>GPI inositol-deacylase</fullName>
        <ecNumber>3.1.-.-</ecNumber>
    </recommendedName>
</protein>
<evidence type="ECO:0000250" key="1"/>
<evidence type="ECO:0000255" key="2"/>
<evidence type="ECO:0000305" key="3"/>
<accession>P0CM51</accession>
<accession>Q55R18</accession>
<accession>Q5KF48</accession>